<proteinExistence type="evidence at transcript level"/>
<keyword id="KW-0106">Calcium</keyword>
<keyword id="KW-0109">Calcium transport</keyword>
<keyword id="KW-0256">Endoplasmic reticulum</keyword>
<keyword id="KW-0406">Ion transport</keyword>
<keyword id="KW-0472">Membrane</keyword>
<keyword id="KW-1185">Reference proteome</keyword>
<keyword id="KW-0732">Signal</keyword>
<keyword id="KW-0812">Transmembrane</keyword>
<keyword id="KW-1133">Transmembrane helix</keyword>
<keyword id="KW-0813">Transport</keyword>
<reference key="1">
    <citation type="journal article" date="2004" name="Genome Res.">
        <title>The status, quality, and expansion of the NIH full-length cDNA project: the Mammalian Gene Collection (MGC).</title>
        <authorList>
            <consortium name="The MGC Project Team"/>
        </authorList>
    </citation>
    <scope>NUCLEOTIDE SEQUENCE [LARGE SCALE MRNA]</scope>
    <source>
        <strain>Brown Norway</strain>
        <tissue>Testis</tissue>
    </source>
</reference>
<organism>
    <name type="scientific">Rattus norvegicus</name>
    <name type="common">Rat</name>
    <dbReference type="NCBI Taxonomy" id="10116"/>
    <lineage>
        <taxon>Eukaryota</taxon>
        <taxon>Metazoa</taxon>
        <taxon>Chordata</taxon>
        <taxon>Craniata</taxon>
        <taxon>Vertebrata</taxon>
        <taxon>Euteleostomi</taxon>
        <taxon>Mammalia</taxon>
        <taxon>Eutheria</taxon>
        <taxon>Euarchontoglires</taxon>
        <taxon>Glires</taxon>
        <taxon>Rodentia</taxon>
        <taxon>Myomorpha</taxon>
        <taxon>Muroidea</taxon>
        <taxon>Muridae</taxon>
        <taxon>Murinae</taxon>
        <taxon>Rattus</taxon>
    </lineage>
</organism>
<comment type="function">
    <text evidence="1">Negative regulator of store-operated Ca(2+) entry (SOCE) involved in protecting cells from Ca(2+) overfilling. In response to cytosolic Ca(2+) elevation after endoplasmic reticulum Ca(2+) refilling, promotes a slow inactivation of STIM (STIM1 or STIM2)-dependent SOCE activity: possibly act by facilitating the deoligomerization of STIM to efficiently turn off ORAI when the endoplasmic reticulum lumen is filled with the appropriate Ca(2+) levels, and thus preventing the overload of the cell with excessive Ca(2+) ions (By similarity).</text>
</comment>
<comment type="subunit">
    <text evidence="2">Interacts with STIM1; the interaction is inhibited by the interaction of STIM1 with EFHB.</text>
</comment>
<comment type="subcellular location">
    <subcellularLocation>
        <location evidence="1">Endoplasmic reticulum membrane</location>
        <topology evidence="1">Single-pass type I membrane protein</topology>
    </subcellularLocation>
    <text evidence="1">Translocates to the endoplasmic reticulum-plasma membrane (ER-PM) region in a STIM1-dependent manner following cytosolic Ca(2+) elevation.</text>
</comment>
<comment type="domain">
    <text evidence="1">The cytoplasmic C-terminal region mediates interaction with STIM1, while the N-terminal lumenal region mediates regulation of SOCE activity.</text>
</comment>
<comment type="similarity">
    <text evidence="5">Belongs to the SARAF family.</text>
</comment>
<feature type="signal peptide" evidence="3">
    <location>
        <begin position="1"/>
        <end position="31"/>
    </location>
</feature>
<feature type="chain" id="PRO_0000045488" description="Store-operated calcium entry-associated regulatory factor">
    <location>
        <begin position="32"/>
        <end position="334"/>
    </location>
</feature>
<feature type="topological domain" description="Lumenal" evidence="3">
    <location>
        <begin position="32"/>
        <end position="168"/>
    </location>
</feature>
<feature type="transmembrane region" description="Helical" evidence="3">
    <location>
        <begin position="169"/>
        <end position="189"/>
    </location>
</feature>
<feature type="topological domain" description="Cytoplasmic" evidence="3">
    <location>
        <begin position="190"/>
        <end position="334"/>
    </location>
</feature>
<feature type="region of interest" description="Disordered" evidence="4">
    <location>
        <begin position="308"/>
        <end position="334"/>
    </location>
</feature>
<feature type="compositionally biased region" description="Low complexity" evidence="4">
    <location>
        <begin position="313"/>
        <end position="326"/>
    </location>
</feature>
<accession>Q6AYN2</accession>
<sequence length="334" mass="35885">MAVAAVGRPRAVRCLLLLLLSFLLVAGPALCWKNPDRILLRDVEALTLYSDRYTTSRRLDPIPQLKCVGGTAGCDAYTPKVVQCQNKGWDGYDVQWECKTDLDIAYKFGKTVVSCEGYDSSEDQYILRGSCGLEYNLDYTELGLSKLKESGKHQSFSDYYHKLSSVDSCGLVTVAVLFVLAFVVYKLFLSDGQGSPPPYSEHPPYSQHSQRFAGTAGAPPPGFKSDFTGPQSTSYGASSGFGSAFGGQSYASSGPGFWSGLGAGGLLGYLFGSNRAATPFSGSWYHPSYPSSYAGAWNSHAYSPLGGGAGRYSASSNTESRTRTTSGYGGTRRR</sequence>
<evidence type="ECO:0000250" key="1"/>
<evidence type="ECO:0000250" key="2">
    <source>
        <dbReference type="UniProtKB" id="Q96BY9"/>
    </source>
</evidence>
<evidence type="ECO:0000255" key="3"/>
<evidence type="ECO:0000256" key="4">
    <source>
        <dbReference type="SAM" id="MobiDB-lite"/>
    </source>
</evidence>
<evidence type="ECO:0000305" key="5"/>
<gene>
    <name type="primary">Saraf</name>
    <name type="synonym">Tmem66</name>
</gene>
<dbReference type="EMBL" id="BC078979">
    <property type="protein sequence ID" value="AAH78979.1"/>
    <property type="molecule type" value="mRNA"/>
</dbReference>
<dbReference type="RefSeq" id="NP_001004213.1">
    <property type="nucleotide sequence ID" value="NM_001004213.1"/>
</dbReference>
<dbReference type="SMR" id="Q6AYN2"/>
<dbReference type="FunCoup" id="Q6AYN2">
    <property type="interactions" value="545"/>
</dbReference>
<dbReference type="STRING" id="10116.ENSRNOP00000016792"/>
<dbReference type="GlyGen" id="Q6AYN2">
    <property type="glycosylation" value="1 site"/>
</dbReference>
<dbReference type="PhosphoSitePlus" id="Q6AYN2"/>
<dbReference type="PaxDb" id="10116-ENSRNOP00000016792"/>
<dbReference type="GeneID" id="290796"/>
<dbReference type="KEGG" id="rno:290796"/>
<dbReference type="AGR" id="RGD:1303011"/>
<dbReference type="CTD" id="51669"/>
<dbReference type="RGD" id="1303011">
    <property type="gene designation" value="Saraf"/>
</dbReference>
<dbReference type="VEuPathDB" id="HostDB:ENSRNOG00000012329"/>
<dbReference type="eggNOG" id="ENOG502QT6Y">
    <property type="taxonomic scope" value="Eukaryota"/>
</dbReference>
<dbReference type="HOGENOM" id="CLU_046802_0_1_1"/>
<dbReference type="InParanoid" id="Q6AYN2"/>
<dbReference type="OrthoDB" id="82527at9989"/>
<dbReference type="PhylomeDB" id="Q6AYN2"/>
<dbReference type="PRO" id="PR:Q6AYN2"/>
<dbReference type="Proteomes" id="UP000002494">
    <property type="component" value="Chromosome 16"/>
</dbReference>
<dbReference type="Bgee" id="ENSRNOG00000012329">
    <property type="expression patterns" value="Expressed in Ammon's horn and 20 other cell types or tissues"/>
</dbReference>
<dbReference type="GO" id="GO:0005789">
    <property type="term" value="C:endoplasmic reticulum membrane"/>
    <property type="evidence" value="ECO:0000250"/>
    <property type="project" value="UniProtKB"/>
</dbReference>
<dbReference type="GO" id="GO:0140268">
    <property type="term" value="C:endoplasmic reticulum-plasma membrane contact site"/>
    <property type="evidence" value="ECO:0000250"/>
    <property type="project" value="UniProtKB"/>
</dbReference>
<dbReference type="GO" id="GO:0006816">
    <property type="term" value="P:calcium ion transport"/>
    <property type="evidence" value="ECO:0007669"/>
    <property type="project" value="UniProtKB-KW"/>
</dbReference>
<dbReference type="GO" id="GO:2001256">
    <property type="term" value="P:regulation of store-operated calcium entry"/>
    <property type="evidence" value="ECO:0000250"/>
    <property type="project" value="UniProtKB"/>
</dbReference>
<dbReference type="InterPro" id="IPR009567">
    <property type="entry name" value="SARAF"/>
</dbReference>
<dbReference type="PANTHER" id="PTHR15929">
    <property type="entry name" value="STORE-OPERATED CALCIUM ENTRY-ASSOCIATED REGULATORY FACTOR"/>
    <property type="match status" value="1"/>
</dbReference>
<dbReference type="PANTHER" id="PTHR15929:SF0">
    <property type="entry name" value="STORE-OPERATED CALCIUM ENTRY-ASSOCIATED REGULATORY FACTOR"/>
    <property type="match status" value="1"/>
</dbReference>
<dbReference type="Pfam" id="PF06682">
    <property type="entry name" value="SARAF"/>
    <property type="match status" value="1"/>
</dbReference>
<name>SARAF_RAT</name>
<protein>
    <recommendedName>
        <fullName>Store-operated calcium entry-associated regulatory factor</fullName>
        <shortName>SARAF</shortName>
        <shortName>SOCE-associated regulatory factor</shortName>
    </recommendedName>
    <alternativeName>
        <fullName>Transmembrane protein 66</fullName>
    </alternativeName>
</protein>